<proteinExistence type="inferred from homology"/>
<organism>
    <name type="scientific">Clavibacter michiganensis subsp. michiganensis (strain NCPPB 382)</name>
    <dbReference type="NCBI Taxonomy" id="443906"/>
    <lineage>
        <taxon>Bacteria</taxon>
        <taxon>Bacillati</taxon>
        <taxon>Actinomycetota</taxon>
        <taxon>Actinomycetes</taxon>
        <taxon>Micrococcales</taxon>
        <taxon>Microbacteriaceae</taxon>
        <taxon>Clavibacter</taxon>
    </lineage>
</organism>
<keyword id="KW-0678">Repressor</keyword>
<keyword id="KW-0687">Ribonucleoprotein</keyword>
<keyword id="KW-0689">Ribosomal protein</keyword>
<keyword id="KW-0694">RNA-binding</keyword>
<keyword id="KW-0699">rRNA-binding</keyword>
<keyword id="KW-0810">Translation regulation</keyword>
<keyword id="KW-0820">tRNA-binding</keyword>
<comment type="function">
    <text evidence="1">Binds directly to 23S rRNA. The L1 stalk is quite mobile in the ribosome, and is involved in E site tRNA release.</text>
</comment>
<comment type="function">
    <text evidence="1">Protein L1 is also a translational repressor protein, it controls the translation of the L11 operon by binding to its mRNA.</text>
</comment>
<comment type="subunit">
    <text evidence="1">Part of the 50S ribosomal subunit.</text>
</comment>
<comment type="similarity">
    <text evidence="1">Belongs to the universal ribosomal protein uL1 family.</text>
</comment>
<sequence length="228" mass="23662">MAKSKAYRAAAEKIDPAKAYTASEAVELARETGSSKFDSTVEVALKLGVDPRKADQMVRGTVILPHGTGKTARVIVFATGPAAEAAIAAGADEVGGDELIEKVAGGYTSFDSAVSTPELMGKVGRLGKVLGPRGLMPNPKTGTVTPDVARAVSDIKGGKIEFRVDKHANVHFVVGKASFSPEQLSENVGAALEEIVRLKPSSSKGRYVQKATVSTTFGPGIPVDVNSI</sequence>
<reference key="1">
    <citation type="journal article" date="2008" name="J. Bacteriol.">
        <title>The genome sequence of the tomato-pathogenic actinomycete Clavibacter michiganensis subsp. michiganensis NCPPB382 reveals a large island involved in pathogenicity.</title>
        <authorList>
            <person name="Gartemann K.-H."/>
            <person name="Abt B."/>
            <person name="Bekel T."/>
            <person name="Burger A."/>
            <person name="Engemann J."/>
            <person name="Fluegel M."/>
            <person name="Gaigalat L."/>
            <person name="Goesmann A."/>
            <person name="Graefen I."/>
            <person name="Kalinowski J."/>
            <person name="Kaup O."/>
            <person name="Kirchner O."/>
            <person name="Krause L."/>
            <person name="Linke B."/>
            <person name="McHardy A."/>
            <person name="Meyer F."/>
            <person name="Pohle S."/>
            <person name="Rueckert C."/>
            <person name="Schneiker S."/>
            <person name="Zellermann E.-M."/>
            <person name="Puehler A."/>
            <person name="Eichenlaub R."/>
            <person name="Kaiser O."/>
            <person name="Bartels D."/>
        </authorList>
    </citation>
    <scope>NUCLEOTIDE SEQUENCE [LARGE SCALE GENOMIC DNA]</scope>
    <source>
        <strain>NCPPB 382</strain>
    </source>
</reference>
<name>RL1_CLAM3</name>
<feature type="chain" id="PRO_0000307988" description="Large ribosomal subunit protein uL1">
    <location>
        <begin position="1"/>
        <end position="228"/>
    </location>
</feature>
<gene>
    <name evidence="1" type="primary">rplA</name>
    <name type="ordered locus">CMM_2786</name>
</gene>
<evidence type="ECO:0000255" key="1">
    <source>
        <dbReference type="HAMAP-Rule" id="MF_01318"/>
    </source>
</evidence>
<evidence type="ECO:0000305" key="2"/>
<accession>A5CUT3</accession>
<dbReference type="EMBL" id="AM711867">
    <property type="protein sequence ID" value="CAN02871.1"/>
    <property type="molecule type" value="Genomic_DNA"/>
</dbReference>
<dbReference type="RefSeq" id="WP_012039475.1">
    <property type="nucleotide sequence ID" value="NC_009480.1"/>
</dbReference>
<dbReference type="SMR" id="A5CUT3"/>
<dbReference type="GeneID" id="92948797"/>
<dbReference type="KEGG" id="cmi:CMM_2786"/>
<dbReference type="eggNOG" id="COG0081">
    <property type="taxonomic scope" value="Bacteria"/>
</dbReference>
<dbReference type="HOGENOM" id="CLU_062853_0_0_11"/>
<dbReference type="OrthoDB" id="9803740at2"/>
<dbReference type="Proteomes" id="UP000001564">
    <property type="component" value="Chromosome"/>
</dbReference>
<dbReference type="GO" id="GO:0015934">
    <property type="term" value="C:large ribosomal subunit"/>
    <property type="evidence" value="ECO:0007669"/>
    <property type="project" value="InterPro"/>
</dbReference>
<dbReference type="GO" id="GO:0019843">
    <property type="term" value="F:rRNA binding"/>
    <property type="evidence" value="ECO:0007669"/>
    <property type="project" value="UniProtKB-UniRule"/>
</dbReference>
<dbReference type="GO" id="GO:0003735">
    <property type="term" value="F:structural constituent of ribosome"/>
    <property type="evidence" value="ECO:0007669"/>
    <property type="project" value="InterPro"/>
</dbReference>
<dbReference type="GO" id="GO:0000049">
    <property type="term" value="F:tRNA binding"/>
    <property type="evidence" value="ECO:0007669"/>
    <property type="project" value="UniProtKB-KW"/>
</dbReference>
<dbReference type="GO" id="GO:0006417">
    <property type="term" value="P:regulation of translation"/>
    <property type="evidence" value="ECO:0007669"/>
    <property type="project" value="UniProtKB-KW"/>
</dbReference>
<dbReference type="GO" id="GO:0006412">
    <property type="term" value="P:translation"/>
    <property type="evidence" value="ECO:0007669"/>
    <property type="project" value="UniProtKB-UniRule"/>
</dbReference>
<dbReference type="CDD" id="cd00403">
    <property type="entry name" value="Ribosomal_L1"/>
    <property type="match status" value="1"/>
</dbReference>
<dbReference type="FunFam" id="3.40.50.790:FF:000001">
    <property type="entry name" value="50S ribosomal protein L1"/>
    <property type="match status" value="1"/>
</dbReference>
<dbReference type="Gene3D" id="3.30.190.20">
    <property type="match status" value="1"/>
</dbReference>
<dbReference type="Gene3D" id="3.40.50.790">
    <property type="match status" value="1"/>
</dbReference>
<dbReference type="HAMAP" id="MF_01318_B">
    <property type="entry name" value="Ribosomal_uL1_B"/>
    <property type="match status" value="1"/>
</dbReference>
<dbReference type="InterPro" id="IPR005878">
    <property type="entry name" value="Ribosom_uL1_bac-type"/>
</dbReference>
<dbReference type="InterPro" id="IPR002143">
    <property type="entry name" value="Ribosomal_uL1"/>
</dbReference>
<dbReference type="InterPro" id="IPR023674">
    <property type="entry name" value="Ribosomal_uL1-like"/>
</dbReference>
<dbReference type="InterPro" id="IPR028364">
    <property type="entry name" value="Ribosomal_uL1/biogenesis"/>
</dbReference>
<dbReference type="InterPro" id="IPR016095">
    <property type="entry name" value="Ribosomal_uL1_3-a/b-sand"/>
</dbReference>
<dbReference type="InterPro" id="IPR023673">
    <property type="entry name" value="Ribosomal_uL1_CS"/>
</dbReference>
<dbReference type="NCBIfam" id="TIGR01169">
    <property type="entry name" value="rplA_bact"/>
    <property type="match status" value="1"/>
</dbReference>
<dbReference type="PANTHER" id="PTHR36427">
    <property type="entry name" value="54S RIBOSOMAL PROTEIN L1, MITOCHONDRIAL"/>
    <property type="match status" value="1"/>
</dbReference>
<dbReference type="PANTHER" id="PTHR36427:SF3">
    <property type="entry name" value="LARGE RIBOSOMAL SUBUNIT PROTEIN UL1M"/>
    <property type="match status" value="1"/>
</dbReference>
<dbReference type="Pfam" id="PF00687">
    <property type="entry name" value="Ribosomal_L1"/>
    <property type="match status" value="1"/>
</dbReference>
<dbReference type="PIRSF" id="PIRSF002155">
    <property type="entry name" value="Ribosomal_L1"/>
    <property type="match status" value="1"/>
</dbReference>
<dbReference type="SUPFAM" id="SSF56808">
    <property type="entry name" value="Ribosomal protein L1"/>
    <property type="match status" value="1"/>
</dbReference>
<dbReference type="PROSITE" id="PS01199">
    <property type="entry name" value="RIBOSOMAL_L1"/>
    <property type="match status" value="1"/>
</dbReference>
<protein>
    <recommendedName>
        <fullName evidence="1">Large ribosomal subunit protein uL1</fullName>
    </recommendedName>
    <alternativeName>
        <fullName evidence="2">50S ribosomal protein L1</fullName>
    </alternativeName>
</protein>